<protein>
    <recommendedName>
        <fullName evidence="1">Leucine--tRNA ligase</fullName>
        <ecNumber evidence="1">6.1.1.4</ecNumber>
    </recommendedName>
    <alternativeName>
        <fullName evidence="1">Leucyl-tRNA synthetase</fullName>
        <shortName evidence="1">LeuRS</shortName>
    </alternativeName>
</protein>
<accession>Q8XML8</accession>
<feature type="chain" id="PRO_0000152003" description="Leucine--tRNA ligase">
    <location>
        <begin position="1"/>
        <end position="816"/>
    </location>
</feature>
<feature type="short sequence motif" description="'HIGH' region">
    <location>
        <begin position="40"/>
        <end position="51"/>
    </location>
</feature>
<feature type="short sequence motif" description="'KMSKS' region">
    <location>
        <begin position="576"/>
        <end position="580"/>
    </location>
</feature>
<feature type="binding site" evidence="1">
    <location>
        <position position="579"/>
    </location>
    <ligand>
        <name>ATP</name>
        <dbReference type="ChEBI" id="CHEBI:30616"/>
    </ligand>
</feature>
<sequence length="816" mass="92664">MGNYSTAIDKKWQDKWAESGLYKFDPNKEGEKLYVLEMFSYPSGSQLHAGHWFNYGPVDSWARFKRMQGYNVFQPMGFDAFGLPAENFAIKTGIHPQDSTIKNIAKMEEQLKAMGAMFNWENEVVTCSPEYYKWTQWLFLKLYEKGLAYRKKAPVNWCPSCQTVLANEQVVDGACERCSTEVTKKDLTQWFFKITDYADELLDKLDGLDWPEKTVSMQKHWIGRSTGSQVNFKVKDSDLNFDVFTTRVDTLCGVSYVVLAPENPLVDEIVSAEQKEAVENYKEEAKKQSDIERQSISREKTGVFTGAYAIHPLTGKEVPIWVGDYVLATYGTGAVMAVPAHDERDFAFAEKFNLPINRVIEAKDGSETNLPFCEHGILVNSGEFDGLTTDEAKEKIVEKLSSMGLGEKKVNFRLRDWLVSRQRYWGAPIPVVYCEECGIVPVPESQLPVELPYDVEFAPDGKSPLAKSEAFVNTTCPHCGKPAKRETDTLDTFVCSSWYYLRYPDNKNTEAPFNPELINKMLPVDKYVGGPEHACMHLLYARFITKALRDMGYLNFDEPFTSLTHQGLILGPDGLKMSKSKGNTISPDDYIKEYGADVFRMYLMFGFAYTEGGAWSDDGIKSVNRFVERIERIIDTAREAISKGENNKTTMDKAEKELNYWRHNTIKSVTDDTDKLQFNTAIARMMEFINALSKYTQEKEMNLDFLKDVVSDYLRLLAPFAPHFSEEQWNLLGNSYSIFNEAWPKFDPKALVKDEVEIAIQVNGKIKNKIMVSSDLDEEGIKAAALADEKIIASTEGKTVVKVIVIKGRLVNIVVK</sequence>
<gene>
    <name evidence="1" type="primary">leuS</name>
    <name type="ordered locus">CPE0670</name>
</gene>
<organism>
    <name type="scientific">Clostridium perfringens (strain 13 / Type A)</name>
    <dbReference type="NCBI Taxonomy" id="195102"/>
    <lineage>
        <taxon>Bacteria</taxon>
        <taxon>Bacillati</taxon>
        <taxon>Bacillota</taxon>
        <taxon>Clostridia</taxon>
        <taxon>Eubacteriales</taxon>
        <taxon>Clostridiaceae</taxon>
        <taxon>Clostridium</taxon>
    </lineage>
</organism>
<evidence type="ECO:0000255" key="1">
    <source>
        <dbReference type="HAMAP-Rule" id="MF_00049"/>
    </source>
</evidence>
<dbReference type="EC" id="6.1.1.4" evidence="1"/>
<dbReference type="EMBL" id="BA000016">
    <property type="protein sequence ID" value="BAB80376.1"/>
    <property type="molecule type" value="Genomic_DNA"/>
</dbReference>
<dbReference type="RefSeq" id="WP_011009963.1">
    <property type="nucleotide sequence ID" value="NC_003366.1"/>
</dbReference>
<dbReference type="SMR" id="Q8XML8"/>
<dbReference type="STRING" id="195102.gene:10489931"/>
<dbReference type="KEGG" id="cpe:CPE0670"/>
<dbReference type="HOGENOM" id="CLU_004427_0_0_9"/>
<dbReference type="Proteomes" id="UP000000818">
    <property type="component" value="Chromosome"/>
</dbReference>
<dbReference type="GO" id="GO:0005829">
    <property type="term" value="C:cytosol"/>
    <property type="evidence" value="ECO:0007669"/>
    <property type="project" value="TreeGrafter"/>
</dbReference>
<dbReference type="GO" id="GO:0002161">
    <property type="term" value="F:aminoacyl-tRNA deacylase activity"/>
    <property type="evidence" value="ECO:0007669"/>
    <property type="project" value="InterPro"/>
</dbReference>
<dbReference type="GO" id="GO:0005524">
    <property type="term" value="F:ATP binding"/>
    <property type="evidence" value="ECO:0007669"/>
    <property type="project" value="UniProtKB-UniRule"/>
</dbReference>
<dbReference type="GO" id="GO:0004823">
    <property type="term" value="F:leucine-tRNA ligase activity"/>
    <property type="evidence" value="ECO:0007669"/>
    <property type="project" value="UniProtKB-UniRule"/>
</dbReference>
<dbReference type="GO" id="GO:0006429">
    <property type="term" value="P:leucyl-tRNA aminoacylation"/>
    <property type="evidence" value="ECO:0007669"/>
    <property type="project" value="UniProtKB-UniRule"/>
</dbReference>
<dbReference type="CDD" id="cd07958">
    <property type="entry name" value="Anticodon_Ia_Leu_BEm"/>
    <property type="match status" value="1"/>
</dbReference>
<dbReference type="CDD" id="cd00812">
    <property type="entry name" value="LeuRS_core"/>
    <property type="match status" value="1"/>
</dbReference>
<dbReference type="FunFam" id="1.10.730.10:FF:000002">
    <property type="entry name" value="Leucine--tRNA ligase"/>
    <property type="match status" value="1"/>
</dbReference>
<dbReference type="FunFam" id="3.40.50.620:FF:000003">
    <property type="entry name" value="Leucine--tRNA ligase"/>
    <property type="match status" value="1"/>
</dbReference>
<dbReference type="FunFam" id="3.40.50.620:FF:000056">
    <property type="entry name" value="Leucine--tRNA ligase"/>
    <property type="match status" value="1"/>
</dbReference>
<dbReference type="Gene3D" id="3.10.20.590">
    <property type="match status" value="1"/>
</dbReference>
<dbReference type="Gene3D" id="3.40.50.620">
    <property type="entry name" value="HUPs"/>
    <property type="match status" value="2"/>
</dbReference>
<dbReference type="Gene3D" id="1.10.730.10">
    <property type="entry name" value="Isoleucyl-tRNA Synthetase, Domain 1"/>
    <property type="match status" value="2"/>
</dbReference>
<dbReference type="HAMAP" id="MF_00049_B">
    <property type="entry name" value="Leu_tRNA_synth_B"/>
    <property type="match status" value="1"/>
</dbReference>
<dbReference type="InterPro" id="IPR002300">
    <property type="entry name" value="aa-tRNA-synth_Ia"/>
</dbReference>
<dbReference type="InterPro" id="IPR002302">
    <property type="entry name" value="Leu-tRNA-ligase"/>
</dbReference>
<dbReference type="InterPro" id="IPR025709">
    <property type="entry name" value="Leu_tRNA-synth_edit"/>
</dbReference>
<dbReference type="InterPro" id="IPR013155">
    <property type="entry name" value="M/V/L/I-tRNA-synth_anticd-bd"/>
</dbReference>
<dbReference type="InterPro" id="IPR015413">
    <property type="entry name" value="Methionyl/Leucyl_tRNA_Synth"/>
</dbReference>
<dbReference type="InterPro" id="IPR014729">
    <property type="entry name" value="Rossmann-like_a/b/a_fold"/>
</dbReference>
<dbReference type="InterPro" id="IPR009080">
    <property type="entry name" value="tRNAsynth_Ia_anticodon-bd"/>
</dbReference>
<dbReference type="InterPro" id="IPR009008">
    <property type="entry name" value="Val/Leu/Ile-tRNA-synth_edit"/>
</dbReference>
<dbReference type="NCBIfam" id="TIGR00396">
    <property type="entry name" value="leuS_bact"/>
    <property type="match status" value="1"/>
</dbReference>
<dbReference type="PANTHER" id="PTHR43740:SF2">
    <property type="entry name" value="LEUCINE--TRNA LIGASE, MITOCHONDRIAL"/>
    <property type="match status" value="1"/>
</dbReference>
<dbReference type="PANTHER" id="PTHR43740">
    <property type="entry name" value="LEUCYL-TRNA SYNTHETASE"/>
    <property type="match status" value="1"/>
</dbReference>
<dbReference type="Pfam" id="PF08264">
    <property type="entry name" value="Anticodon_1"/>
    <property type="match status" value="1"/>
</dbReference>
<dbReference type="Pfam" id="PF00133">
    <property type="entry name" value="tRNA-synt_1"/>
    <property type="match status" value="1"/>
</dbReference>
<dbReference type="Pfam" id="PF13603">
    <property type="entry name" value="tRNA-synt_1_2"/>
    <property type="match status" value="1"/>
</dbReference>
<dbReference type="Pfam" id="PF09334">
    <property type="entry name" value="tRNA-synt_1g"/>
    <property type="match status" value="1"/>
</dbReference>
<dbReference type="PRINTS" id="PR00985">
    <property type="entry name" value="TRNASYNTHLEU"/>
</dbReference>
<dbReference type="SUPFAM" id="SSF47323">
    <property type="entry name" value="Anticodon-binding domain of a subclass of class I aminoacyl-tRNA synthetases"/>
    <property type="match status" value="1"/>
</dbReference>
<dbReference type="SUPFAM" id="SSF52374">
    <property type="entry name" value="Nucleotidylyl transferase"/>
    <property type="match status" value="1"/>
</dbReference>
<dbReference type="SUPFAM" id="SSF50677">
    <property type="entry name" value="ValRS/IleRS/LeuRS editing domain"/>
    <property type="match status" value="1"/>
</dbReference>
<reference key="1">
    <citation type="journal article" date="2002" name="Proc. Natl. Acad. Sci. U.S.A.">
        <title>Complete genome sequence of Clostridium perfringens, an anaerobic flesh-eater.</title>
        <authorList>
            <person name="Shimizu T."/>
            <person name="Ohtani K."/>
            <person name="Hirakawa H."/>
            <person name="Ohshima K."/>
            <person name="Yamashita A."/>
            <person name="Shiba T."/>
            <person name="Ogasawara N."/>
            <person name="Hattori M."/>
            <person name="Kuhara S."/>
            <person name="Hayashi H."/>
        </authorList>
    </citation>
    <scope>NUCLEOTIDE SEQUENCE [LARGE SCALE GENOMIC DNA]</scope>
    <source>
        <strain>13 / Type A</strain>
    </source>
</reference>
<keyword id="KW-0030">Aminoacyl-tRNA synthetase</keyword>
<keyword id="KW-0067">ATP-binding</keyword>
<keyword id="KW-0963">Cytoplasm</keyword>
<keyword id="KW-0436">Ligase</keyword>
<keyword id="KW-0547">Nucleotide-binding</keyword>
<keyword id="KW-0648">Protein biosynthesis</keyword>
<keyword id="KW-1185">Reference proteome</keyword>
<proteinExistence type="inferred from homology"/>
<comment type="catalytic activity">
    <reaction evidence="1">
        <text>tRNA(Leu) + L-leucine + ATP = L-leucyl-tRNA(Leu) + AMP + diphosphate</text>
        <dbReference type="Rhea" id="RHEA:11688"/>
        <dbReference type="Rhea" id="RHEA-COMP:9613"/>
        <dbReference type="Rhea" id="RHEA-COMP:9622"/>
        <dbReference type="ChEBI" id="CHEBI:30616"/>
        <dbReference type="ChEBI" id="CHEBI:33019"/>
        <dbReference type="ChEBI" id="CHEBI:57427"/>
        <dbReference type="ChEBI" id="CHEBI:78442"/>
        <dbReference type="ChEBI" id="CHEBI:78494"/>
        <dbReference type="ChEBI" id="CHEBI:456215"/>
        <dbReference type="EC" id="6.1.1.4"/>
    </reaction>
</comment>
<comment type="subcellular location">
    <subcellularLocation>
        <location evidence="1">Cytoplasm</location>
    </subcellularLocation>
</comment>
<comment type="similarity">
    <text evidence="1">Belongs to the class-I aminoacyl-tRNA synthetase family.</text>
</comment>
<name>SYL_CLOPE</name>